<keyword id="KW-1003">Cell membrane</keyword>
<keyword id="KW-0202">Cytokine</keyword>
<keyword id="KW-1015">Disulfide bond</keyword>
<keyword id="KW-0325">Glycoprotein</keyword>
<keyword id="KW-0449">Lipoprotein</keyword>
<keyword id="KW-0472">Membrane</keyword>
<keyword id="KW-0519">Myristate</keyword>
<keyword id="KW-0597">Phosphoprotein</keyword>
<keyword id="KW-0964">Secreted</keyword>
<keyword id="KW-0735">Signal-anchor</keyword>
<keyword id="KW-0812">Transmembrane</keyword>
<keyword id="KW-1133">Transmembrane helix</keyword>
<evidence type="ECO:0000250" key="1"/>
<evidence type="ECO:0000250" key="2">
    <source>
        <dbReference type="UniProtKB" id="P01375"/>
    </source>
</evidence>
<evidence type="ECO:0000250" key="3">
    <source>
        <dbReference type="UniProtKB" id="P06804"/>
    </source>
</evidence>
<evidence type="ECO:0000255" key="4"/>
<evidence type="ECO:0000255" key="5">
    <source>
        <dbReference type="PROSITE-ProRule" id="PRU01387"/>
    </source>
</evidence>
<evidence type="ECO:0000305" key="6"/>
<protein>
    <recommendedName>
        <fullName>Tumor necrosis factor</fullName>
    </recommendedName>
    <alternativeName>
        <fullName>Cachectin</fullName>
    </alternativeName>
    <alternativeName>
        <fullName>TNF-alpha</fullName>
    </alternativeName>
    <alternativeName>
        <fullName>Tumor necrosis factor ligand superfamily member 2</fullName>
        <shortName>TNF-a</shortName>
    </alternativeName>
    <component>
        <recommendedName>
            <fullName>Tumor necrosis factor, membrane form</fullName>
        </recommendedName>
        <alternativeName>
            <fullName>N-terminal fragment</fullName>
            <shortName>NTF</shortName>
        </alternativeName>
    </component>
    <component>
        <recommendedName>
            <fullName>Intracellular domain 1</fullName>
            <shortName>ICD1</shortName>
        </recommendedName>
    </component>
    <component>
        <recommendedName>
            <fullName>Intracellular domain 2</fullName>
            <shortName>ICD2</shortName>
        </recommendedName>
    </component>
    <component>
        <recommendedName>
            <fullName>C-domain 1</fullName>
        </recommendedName>
    </component>
    <component>
        <recommendedName>
            <fullName>C-domain 2</fullName>
        </recommendedName>
    </component>
    <component>
        <recommendedName>
            <fullName>Tumor necrosis factor, soluble form</fullName>
        </recommendedName>
    </component>
</protein>
<comment type="function">
    <text evidence="2 3">Cytokine that binds to TNFRSF1A/TNFR1 and TNFRSF1B/TNFBR. It is mainly secreted by macrophages and can induce cell death of certain tumor cell lines. It is potent pyrogen causing fever by direct action or by stimulation of interleukin-1 secretion and is implicated in the induction of cachexia, Under certain conditions it can stimulate cell proliferation and induce cell differentiation (By similarity). Induces insulin resistance in adipocytes via inhibition of insulin-induced IRS1 tyrosine phosphorylation and insulin-induced glucose uptake. Induces GKAP42 protein degradation in adipocytes which is partially responsible for TNF-induced insulin resistance (By similarity). Plays a role in angiogenesis by inducing VEGF production synergistically with IL1B and IL6 (By similarity). Promotes osteoclastogenesis and therefore mediates bone resorption (By similarity).</text>
</comment>
<comment type="function">
    <text evidence="2">The TNF intracellular domain (ICD) form induces IL12 production in dendritic cells.</text>
</comment>
<comment type="subunit">
    <text evidence="1">Homotrimer. Interacts with SPPL2B (By similarity).</text>
</comment>
<comment type="subcellular location">
    <subcellularLocation>
        <location evidence="1">Cell membrane</location>
        <topology evidence="1">Single-pass type II membrane protein</topology>
    </subcellularLocation>
</comment>
<comment type="subcellular location">
    <molecule>Tumor necrosis factor, membrane form</molecule>
    <subcellularLocation>
        <location evidence="1">Membrane</location>
        <topology evidence="1">Single-pass type II membrane protein</topology>
    </subcellularLocation>
</comment>
<comment type="subcellular location">
    <molecule>Tumor necrosis factor, soluble form</molecule>
    <subcellularLocation>
        <location evidence="1">Secreted</location>
    </subcellularLocation>
</comment>
<comment type="subcellular location">
    <molecule>C-domain 1</molecule>
    <subcellularLocation>
        <location evidence="1">Secreted</location>
    </subcellularLocation>
</comment>
<comment type="subcellular location">
    <molecule>C-domain 2</molecule>
    <subcellularLocation>
        <location evidence="1">Secreted</location>
    </subcellularLocation>
</comment>
<comment type="PTM">
    <text evidence="1">The soluble form derives from the membrane form by proteolytic processing. The membrane-bound form is further proteolytically processed by SPPL2A or SPPL2B through regulated intramembrane proteolysis producing TNF intracellular domains (ICD1 and ICD2) released in the cytosol and TNF C-domain 1 and C-domain 2 secreted into the extracellular space (By similarity).</text>
</comment>
<comment type="PTM">
    <text evidence="1">The membrane form, but not the soluble form, is phosphorylated on serine residues. Dephosphorylation of the membrane form occurs by binding to soluble TNFRSF1A/TNFR1 (By similarity).</text>
</comment>
<comment type="PTM">
    <text evidence="1">O-glycosylated; glycans contain galactose, N-acetylgalactosamine and N-acetylneuraminic acid.</text>
</comment>
<comment type="PTM">
    <molecule>Tumor necrosis factor, soluble form</molecule>
    <text evidence="2">The soluble form is demyristoylated by SIRT6, promoting its secretion.</text>
</comment>
<comment type="similarity">
    <text evidence="6">Belongs to the tumor necrosis factor family.</text>
</comment>
<dbReference type="EMBL" id="X62141">
    <property type="protein sequence ID" value="CAA44068.1"/>
    <property type="molecule type" value="Genomic_DNA"/>
</dbReference>
<dbReference type="PIR" id="S22052">
    <property type="entry name" value="S22052"/>
</dbReference>
<dbReference type="SMR" id="P33620"/>
<dbReference type="GlyCosmos" id="P33620">
    <property type="glycosylation" value="1 site, No reported glycans"/>
</dbReference>
<dbReference type="GO" id="GO:0009986">
    <property type="term" value="C:cell surface"/>
    <property type="evidence" value="ECO:0007669"/>
    <property type="project" value="TreeGrafter"/>
</dbReference>
<dbReference type="GO" id="GO:0005615">
    <property type="term" value="C:extracellular space"/>
    <property type="evidence" value="ECO:0007669"/>
    <property type="project" value="UniProtKB-KW"/>
</dbReference>
<dbReference type="GO" id="GO:0005886">
    <property type="term" value="C:plasma membrane"/>
    <property type="evidence" value="ECO:0007669"/>
    <property type="project" value="UniProtKB-SubCell"/>
</dbReference>
<dbReference type="GO" id="GO:0005125">
    <property type="term" value="F:cytokine activity"/>
    <property type="evidence" value="ECO:0007669"/>
    <property type="project" value="UniProtKB-KW"/>
</dbReference>
<dbReference type="GO" id="GO:0005164">
    <property type="term" value="F:tumor necrosis factor receptor binding"/>
    <property type="evidence" value="ECO:0007669"/>
    <property type="project" value="InterPro"/>
</dbReference>
<dbReference type="GO" id="GO:0008625">
    <property type="term" value="P:extrinsic apoptotic signaling pathway via death domain receptors"/>
    <property type="evidence" value="ECO:0007669"/>
    <property type="project" value="TreeGrafter"/>
</dbReference>
<dbReference type="GO" id="GO:0006955">
    <property type="term" value="P:immune response"/>
    <property type="evidence" value="ECO:0007669"/>
    <property type="project" value="InterPro"/>
</dbReference>
<dbReference type="GO" id="GO:0043123">
    <property type="term" value="P:positive regulation of canonical NF-kappaB signal transduction"/>
    <property type="evidence" value="ECO:0007669"/>
    <property type="project" value="TreeGrafter"/>
</dbReference>
<dbReference type="GO" id="GO:2001238">
    <property type="term" value="P:positive regulation of extrinsic apoptotic signaling pathway"/>
    <property type="evidence" value="ECO:0007669"/>
    <property type="project" value="TreeGrafter"/>
</dbReference>
<dbReference type="GO" id="GO:0051092">
    <property type="term" value="P:positive regulation of NF-kappaB transcription factor activity"/>
    <property type="evidence" value="ECO:0000250"/>
    <property type="project" value="UniProtKB"/>
</dbReference>
<dbReference type="GO" id="GO:0045944">
    <property type="term" value="P:positive regulation of transcription by RNA polymerase II"/>
    <property type="evidence" value="ECO:0007669"/>
    <property type="project" value="TreeGrafter"/>
</dbReference>
<dbReference type="GO" id="GO:0065008">
    <property type="term" value="P:regulation of biological quality"/>
    <property type="evidence" value="ECO:0007669"/>
    <property type="project" value="UniProtKB-ARBA"/>
</dbReference>
<dbReference type="GO" id="GO:0050793">
    <property type="term" value="P:regulation of developmental process"/>
    <property type="evidence" value="ECO:0007669"/>
    <property type="project" value="UniProtKB-ARBA"/>
</dbReference>
<dbReference type="GO" id="GO:0051239">
    <property type="term" value="P:regulation of multicellular organismal process"/>
    <property type="evidence" value="ECO:0007669"/>
    <property type="project" value="UniProtKB-ARBA"/>
</dbReference>
<dbReference type="GO" id="GO:0051046">
    <property type="term" value="P:regulation of secretion"/>
    <property type="evidence" value="ECO:0007669"/>
    <property type="project" value="UniProtKB-ARBA"/>
</dbReference>
<dbReference type="GO" id="GO:0033209">
    <property type="term" value="P:tumor necrosis factor-mediated signaling pathway"/>
    <property type="evidence" value="ECO:0007669"/>
    <property type="project" value="TreeGrafter"/>
</dbReference>
<dbReference type="GO" id="GO:0010573">
    <property type="term" value="P:vascular endothelial growth factor production"/>
    <property type="evidence" value="ECO:0000250"/>
    <property type="project" value="UniProtKB"/>
</dbReference>
<dbReference type="CDD" id="cd00184">
    <property type="entry name" value="TNF"/>
    <property type="match status" value="1"/>
</dbReference>
<dbReference type="FunFam" id="2.60.120.40:FF:000007">
    <property type="entry name" value="Tumor necrosis factor"/>
    <property type="match status" value="1"/>
</dbReference>
<dbReference type="Gene3D" id="2.60.120.40">
    <property type="match status" value="1"/>
</dbReference>
<dbReference type="InterPro" id="IPR006053">
    <property type="entry name" value="TNF"/>
</dbReference>
<dbReference type="InterPro" id="IPR002959">
    <property type="entry name" value="TNF_alpha"/>
</dbReference>
<dbReference type="InterPro" id="IPR021184">
    <property type="entry name" value="TNF_CS"/>
</dbReference>
<dbReference type="InterPro" id="IPR006052">
    <property type="entry name" value="TNF_dom"/>
</dbReference>
<dbReference type="InterPro" id="IPR008983">
    <property type="entry name" value="Tumour_necrosis_fac-like_dom"/>
</dbReference>
<dbReference type="PANTHER" id="PTHR11471:SF23">
    <property type="entry name" value="TUMOR NECROSIS FACTOR"/>
    <property type="match status" value="1"/>
</dbReference>
<dbReference type="PANTHER" id="PTHR11471">
    <property type="entry name" value="TUMOR NECROSIS FACTOR FAMILY MEMBER"/>
    <property type="match status" value="1"/>
</dbReference>
<dbReference type="Pfam" id="PF00229">
    <property type="entry name" value="TNF"/>
    <property type="match status" value="1"/>
</dbReference>
<dbReference type="PRINTS" id="PR01234">
    <property type="entry name" value="TNECROSISFCT"/>
</dbReference>
<dbReference type="PRINTS" id="PR01235">
    <property type="entry name" value="TNFALPHA"/>
</dbReference>
<dbReference type="SMART" id="SM00207">
    <property type="entry name" value="TNF"/>
    <property type="match status" value="1"/>
</dbReference>
<dbReference type="SUPFAM" id="SSF49842">
    <property type="entry name" value="TNF-like"/>
    <property type="match status" value="1"/>
</dbReference>
<dbReference type="PROSITE" id="PS00251">
    <property type="entry name" value="THD_1"/>
    <property type="match status" value="1"/>
</dbReference>
<dbReference type="PROSITE" id="PS50049">
    <property type="entry name" value="THD_2"/>
    <property type="match status" value="1"/>
</dbReference>
<accession>P33620</accession>
<proteinExistence type="inferred from homology"/>
<gene>
    <name type="primary">TNF</name>
    <name type="synonym">TNFA</name>
    <name type="synonym">TNFSF2</name>
</gene>
<sequence>MSTESMIRDVELAEEALPKKTGGPQGSRRCLFLSLFSFLLVAGATTLFCLLHFGVIGPQREEFPKDPSLISPLAQAVRSSSRTPSDKPVAHVVANPQAEGQLQWLNRRANALLANGVELRDNQLVVPSEGLYLIYSQVLFKGQGCPSTHVLLTHTISRIAVSYQTKVNLLSAIKSPCQRETPEGAEAKPWYEPIYLGGVFQLEKGDRLSAEINLPDYLDFAESGQVYFGIIAL</sequence>
<feature type="chain" id="PRO_0000034443" description="Tumor necrosis factor, membrane form">
    <location>
        <begin position="1"/>
        <end position="233"/>
    </location>
</feature>
<feature type="chain" id="PRO_0000417271" description="Intracellular domain 1" evidence="1">
    <location>
        <begin position="1"/>
        <end position="39"/>
    </location>
</feature>
<feature type="chain" id="PRO_0000417272" description="Intracellular domain 2" evidence="1">
    <location>
        <begin position="1"/>
        <end position="35"/>
    </location>
</feature>
<feature type="chain" id="PRO_0000417273" description="C-domain 1" evidence="1">
    <location>
        <begin position="50"/>
        <end status="unknown"/>
    </location>
</feature>
<feature type="chain" id="PRO_0000417274" description="C-domain 2" evidence="1">
    <location>
        <begin position="52"/>
        <end status="unknown"/>
    </location>
</feature>
<feature type="chain" id="PRO_0000034444" description="Tumor necrosis factor, soluble form">
    <location>
        <begin position="77"/>
        <end position="233"/>
    </location>
</feature>
<feature type="topological domain" description="Cytoplasmic" evidence="4">
    <location>
        <begin position="1"/>
        <end position="35"/>
    </location>
</feature>
<feature type="transmembrane region" description="Helical; Signal-anchor for type II membrane protein" evidence="4">
    <location>
        <begin position="36"/>
        <end position="56"/>
    </location>
</feature>
<feature type="topological domain" description="Extracellular" evidence="4">
    <location>
        <begin position="57"/>
        <end position="233"/>
    </location>
</feature>
<feature type="domain" description="THD" evidence="5">
    <location>
        <begin position="88"/>
        <end position="233"/>
    </location>
</feature>
<feature type="site" description="Cleavage; by SPPL2A or SPPL2B" evidence="1">
    <location>
        <begin position="34"/>
        <end position="35"/>
    </location>
</feature>
<feature type="site" description="Cleavage; by SPPL2A or SPPL2B" evidence="1">
    <location>
        <begin position="39"/>
        <end position="40"/>
    </location>
</feature>
<feature type="site" description="Cleavage; by SPPL2A or SPPL2B" evidence="1">
    <location>
        <begin position="49"/>
        <end position="50"/>
    </location>
</feature>
<feature type="site" description="Cleavage; by SPPL2A or SPPL2B" evidence="1">
    <location>
        <begin position="51"/>
        <end position="52"/>
    </location>
</feature>
<feature type="site" description="Cleavage; by ADAM17" evidence="1">
    <location>
        <begin position="76"/>
        <end position="77"/>
    </location>
</feature>
<feature type="modified residue" description="Phosphoserine; by CK1" evidence="1">
    <location>
        <position position="2"/>
    </location>
</feature>
<feature type="lipid moiety-binding region" description="N6-myristoyl lysine" evidence="2">
    <location>
        <position position="19"/>
    </location>
</feature>
<feature type="lipid moiety-binding region" description="N6-myristoyl lysine" evidence="2">
    <location>
        <position position="20"/>
    </location>
</feature>
<feature type="glycosylation site" description="O-linked (GalNAc...) serine; in soluble form" evidence="1">
    <location>
        <position position="80"/>
    </location>
</feature>
<feature type="disulfide bond" evidence="5">
    <location>
        <begin position="145"/>
        <end position="177"/>
    </location>
</feature>
<organism>
    <name type="scientific">Papio sp.</name>
    <name type="common">Baboon</name>
    <dbReference type="NCBI Taxonomy" id="61183"/>
    <lineage>
        <taxon>Eukaryota</taxon>
        <taxon>Metazoa</taxon>
        <taxon>Chordata</taxon>
        <taxon>Craniata</taxon>
        <taxon>Vertebrata</taxon>
        <taxon>Euteleostomi</taxon>
        <taxon>Mammalia</taxon>
        <taxon>Eutheria</taxon>
        <taxon>Euarchontoglires</taxon>
        <taxon>Primates</taxon>
        <taxon>Haplorrhini</taxon>
        <taxon>Catarrhini</taxon>
        <taxon>Cercopithecidae</taxon>
        <taxon>Cercopithecinae</taxon>
        <taxon>Papio</taxon>
    </lineage>
</organism>
<reference key="1">
    <citation type="submission" date="1991-09" db="EMBL/GenBank/DDBJ databases">
        <authorList>
            <person name="Sanjanwala M."/>
            <person name="Edwards A."/>
        </authorList>
    </citation>
    <scope>NUCLEOTIDE SEQUENCE [GENOMIC DNA]</scope>
</reference>
<name>TNFA_PAPSP</name>